<accession>P98054</accession>
<gene>
    <name type="primary">ctaC</name>
</gene>
<keyword id="KW-1003">Cell membrane</keyword>
<keyword id="KW-0186">Copper</keyword>
<keyword id="KW-0249">Electron transport</keyword>
<keyword id="KW-0472">Membrane</keyword>
<keyword id="KW-0479">Metal-binding</keyword>
<keyword id="KW-0679">Respiratory chain</keyword>
<keyword id="KW-0732">Signal</keyword>
<keyword id="KW-1278">Translocase</keyword>
<keyword id="KW-0812">Transmembrane</keyword>
<keyword id="KW-1133">Transmembrane helix</keyword>
<keyword id="KW-0813">Transport</keyword>
<dbReference type="EC" id="7.1.1.9"/>
<dbReference type="EMBL" id="D16254">
    <property type="protein sequence ID" value="BAA41040.1"/>
    <property type="molecule type" value="Genomic_DNA"/>
</dbReference>
<dbReference type="SMR" id="P98054"/>
<dbReference type="GO" id="GO:0005886">
    <property type="term" value="C:plasma membrane"/>
    <property type="evidence" value="ECO:0007669"/>
    <property type="project" value="UniProtKB-SubCell"/>
</dbReference>
<dbReference type="GO" id="GO:0005507">
    <property type="term" value="F:copper ion binding"/>
    <property type="evidence" value="ECO:0007669"/>
    <property type="project" value="InterPro"/>
</dbReference>
<dbReference type="GO" id="GO:0004129">
    <property type="term" value="F:cytochrome-c oxidase activity"/>
    <property type="evidence" value="ECO:0007669"/>
    <property type="project" value="UniProtKB-EC"/>
</dbReference>
<dbReference type="GO" id="GO:0042773">
    <property type="term" value="P:ATP synthesis coupled electron transport"/>
    <property type="evidence" value="ECO:0007669"/>
    <property type="project" value="TreeGrafter"/>
</dbReference>
<dbReference type="CDD" id="cd13919">
    <property type="entry name" value="CuRO_HCO_II_like_5"/>
    <property type="match status" value="1"/>
</dbReference>
<dbReference type="Gene3D" id="1.10.287.90">
    <property type="match status" value="1"/>
</dbReference>
<dbReference type="Gene3D" id="2.60.40.420">
    <property type="entry name" value="Cupredoxins - blue copper proteins"/>
    <property type="match status" value="1"/>
</dbReference>
<dbReference type="InterPro" id="IPR045187">
    <property type="entry name" value="CcO_II"/>
</dbReference>
<dbReference type="InterPro" id="IPR002429">
    <property type="entry name" value="CcO_II-like_C"/>
</dbReference>
<dbReference type="InterPro" id="IPR001505">
    <property type="entry name" value="Copper_CuA"/>
</dbReference>
<dbReference type="InterPro" id="IPR008972">
    <property type="entry name" value="Cupredoxin"/>
</dbReference>
<dbReference type="InterPro" id="IPR011759">
    <property type="entry name" value="Cyt_c_oxidase_su2_TM_dom"/>
</dbReference>
<dbReference type="InterPro" id="IPR036257">
    <property type="entry name" value="Cyt_c_oxidase_su2_TM_sf"/>
</dbReference>
<dbReference type="PANTHER" id="PTHR22888:SF9">
    <property type="entry name" value="CYTOCHROME C OXIDASE SUBUNIT 2"/>
    <property type="match status" value="1"/>
</dbReference>
<dbReference type="PANTHER" id="PTHR22888">
    <property type="entry name" value="CYTOCHROME C OXIDASE, SUBUNIT II"/>
    <property type="match status" value="1"/>
</dbReference>
<dbReference type="Pfam" id="PF00116">
    <property type="entry name" value="COX2"/>
    <property type="match status" value="1"/>
</dbReference>
<dbReference type="Pfam" id="PF02790">
    <property type="entry name" value="COX2_TM"/>
    <property type="match status" value="1"/>
</dbReference>
<dbReference type="PRINTS" id="PR01166">
    <property type="entry name" value="CYCOXIDASEII"/>
</dbReference>
<dbReference type="SUPFAM" id="SSF49503">
    <property type="entry name" value="Cupredoxins"/>
    <property type="match status" value="1"/>
</dbReference>
<dbReference type="SUPFAM" id="SSF81464">
    <property type="entry name" value="Cytochrome c oxidase subunit II-like, transmembrane region"/>
    <property type="match status" value="1"/>
</dbReference>
<dbReference type="PROSITE" id="PS00078">
    <property type="entry name" value="COX2"/>
    <property type="match status" value="1"/>
</dbReference>
<dbReference type="PROSITE" id="PS50857">
    <property type="entry name" value="COX2_CUA"/>
    <property type="match status" value="1"/>
</dbReference>
<dbReference type="PROSITE" id="PS50999">
    <property type="entry name" value="COX2_TM"/>
    <property type="match status" value="1"/>
</dbReference>
<feature type="signal peptide" evidence="1">
    <location>
        <begin position="1"/>
        <end position="23"/>
    </location>
</feature>
<feature type="chain" id="PRO_0000006064" description="Cytochrome c oxidase subunit 2">
    <location>
        <begin position="24"/>
        <end position="327"/>
    </location>
</feature>
<feature type="transmembrane region" description="Helical" evidence="1">
    <location>
        <begin position="56"/>
        <end position="78"/>
    </location>
</feature>
<feature type="transmembrane region" description="Helical" evidence="1">
    <location>
        <begin position="96"/>
        <end position="114"/>
    </location>
</feature>
<feature type="binding site" evidence="2">
    <location>
        <position position="221"/>
    </location>
    <ligand>
        <name>Cu cation</name>
        <dbReference type="ChEBI" id="CHEBI:23378"/>
        <label>A</label>
    </ligand>
</feature>
<feature type="binding site" evidence="2">
    <location>
        <position position="255"/>
    </location>
    <ligand>
        <name>Cu cation</name>
        <dbReference type="ChEBI" id="CHEBI:23378"/>
        <label>A</label>
    </ligand>
</feature>
<feature type="binding site" evidence="2">
    <location>
        <position position="259"/>
    </location>
    <ligand>
        <name>Cu cation</name>
        <dbReference type="ChEBI" id="CHEBI:23378"/>
        <label>A</label>
    </ligand>
</feature>
<feature type="binding site" evidence="2">
    <location>
        <position position="263"/>
    </location>
    <ligand>
        <name>Cu cation</name>
        <dbReference type="ChEBI" id="CHEBI:23378"/>
        <label>A</label>
    </ligand>
</feature>
<protein>
    <recommendedName>
        <fullName>Cytochrome c oxidase subunit 2</fullName>
        <ecNumber>7.1.1.9</ecNumber>
    </recommendedName>
    <alternativeName>
        <fullName>Cytochrome aa3 subunit 2</fullName>
    </alternativeName>
    <alternativeName>
        <fullName>Cytochrome c oxidase polypeptide II</fullName>
    </alternativeName>
    <alternativeName>
        <fullName>Oxidase aa(3) subunit 2</fullName>
    </alternativeName>
</protein>
<evidence type="ECO:0000255" key="1"/>
<evidence type="ECO:0000305" key="2"/>
<reference key="1">
    <citation type="journal article" date="1991" name="Biochem. Biophys. Res. Commun.">
        <title>The cytochrome C oxidase genes in blue-green algae and characteristics of the deduced protein sequence for subunit II of the thermophilic cyanobacterium Synechococcus vulcanus.</title>
        <authorList>
            <person name="Tano H."/>
            <person name="Sone N."/>
        </authorList>
    </citation>
    <scope>NUCLEOTIDE SEQUENCE [GENOMIC DNA]</scope>
</reference>
<reference key="2">
    <citation type="journal article" date="1993" name="Biochim. Biophys. Acta">
        <title>The genes in the thermophilic cyanobacterium Synechococcus vulcanus encoding cytochrome-c oxidase.</title>
        <authorList>
            <person name="Sone N."/>
            <person name="Tano H."/>
            <person name="Ishizuka M."/>
        </authorList>
    </citation>
    <scope>NUCLEOTIDE SEQUENCE [GENOMIC DNA]</scope>
</reference>
<comment type="function">
    <text>Subunits I and II form the functional core of the enzyme complex. Electrons originating in cytochrome c are transferred via heme a and Cu(A) to the binuclear center formed by heme a3 and Cu(B).</text>
</comment>
<comment type="catalytic activity">
    <reaction>
        <text>4 Fe(II)-[cytochrome c] + O2 + 8 H(+)(in) = 4 Fe(III)-[cytochrome c] + 2 H2O + 4 H(+)(out)</text>
        <dbReference type="Rhea" id="RHEA:11436"/>
        <dbReference type="Rhea" id="RHEA-COMP:10350"/>
        <dbReference type="Rhea" id="RHEA-COMP:14399"/>
        <dbReference type="ChEBI" id="CHEBI:15377"/>
        <dbReference type="ChEBI" id="CHEBI:15378"/>
        <dbReference type="ChEBI" id="CHEBI:15379"/>
        <dbReference type="ChEBI" id="CHEBI:29033"/>
        <dbReference type="ChEBI" id="CHEBI:29034"/>
        <dbReference type="EC" id="7.1.1.9"/>
    </reaction>
</comment>
<comment type="cofactor">
    <cofactor>
        <name>Cu cation</name>
        <dbReference type="ChEBI" id="CHEBI:23378"/>
    </cofactor>
    <text>Binds a copper A center.</text>
</comment>
<comment type="subcellular location">
    <subcellularLocation>
        <location>Cell membrane</location>
        <topology>Multi-pass membrane protein</topology>
    </subcellularLocation>
</comment>
<comment type="similarity">
    <text evidence="2">Belongs to the cytochrome c oxidase subunit 2 family.</text>
</comment>
<name>COX2_THEVL</name>
<organism>
    <name type="scientific">Thermostichus vulcanus</name>
    <name type="common">Synechococcus vulcanus</name>
    <dbReference type="NCBI Taxonomy" id="32053"/>
    <lineage>
        <taxon>Bacteria</taxon>
        <taxon>Bacillati</taxon>
        <taxon>Cyanobacteriota</taxon>
        <taxon>Cyanophyceae</taxon>
        <taxon>Thermostichales</taxon>
        <taxon>Thermostichaceae</taxon>
        <taxon>Thermostichus</taxon>
    </lineage>
</organism>
<sequence length="327" mass="35356">MEQIPASIWTLTAGVVVTLISFWVGHHHGLLPEQASEQAPLVDNFFDIMLTIGTALFLVVQGAIILFVIRYRRRAGEEGDGLPVEGNLPLEAFWTAIPALIVIFLGIYSVDIFQRMGGLNPGDHAMHSMHAPKSGMAVVAQAPSKTTSDATALLAAAQPPEIGIGASPDVQGKAPDLVVDVAGMQYAWIFTYPDSGIVSGELHIPVGKDVQLNLSARDVIHSFWVPQFRLKQDAIPGVPTTRFKATKVGTYPVVCAELCGGYHGAMRTQVIVHTPEDFETWRRQNQAIATAPVIPSLRDRHIHEMGVTAELVAQVEAIAHDPSAEKL</sequence>
<proteinExistence type="inferred from homology"/>